<proteinExistence type="inferred from homology"/>
<organism>
    <name type="scientific">Brugia malayi</name>
    <name type="common">Filarial nematode worm</name>
    <dbReference type="NCBI Taxonomy" id="6279"/>
    <lineage>
        <taxon>Eukaryota</taxon>
        <taxon>Metazoa</taxon>
        <taxon>Ecdysozoa</taxon>
        <taxon>Nematoda</taxon>
        <taxon>Chromadorea</taxon>
        <taxon>Rhabditida</taxon>
        <taxon>Spirurina</taxon>
        <taxon>Spiruromorpha</taxon>
        <taxon>Filarioidea</taxon>
        <taxon>Onchocercidae</taxon>
        <taxon>Brugia</taxon>
    </lineage>
</organism>
<comment type="subunit">
    <text evidence="1">Component of the small ribosomal subunit. Mature ribosomes consist of a small (40S) and a large (60S) subunit. The 40S subunit contains about 33 different proteins and 1 molecule of RNA (18S). The 60S subunit contains about 49 different proteins and 3 molecules of RNA (28S, 5.8S and 5S).</text>
</comment>
<comment type="subcellular location">
    <subcellularLocation>
        <location evidence="1">Cytoplasm</location>
    </subcellularLocation>
</comment>
<comment type="similarity">
    <text evidence="1">Belongs to the eukaryotic ribosomal protein eS1 family.</text>
</comment>
<gene>
    <name evidence="4" type="primary">Bma-rps-1</name>
    <name evidence="4" type="ORF">Bm4490</name>
</gene>
<name>RS3A_BRUMA</name>
<accession>A8PJ38</accession>
<evidence type="ECO:0000255" key="1">
    <source>
        <dbReference type="HAMAP-Rule" id="MF_03122"/>
    </source>
</evidence>
<evidence type="ECO:0000256" key="2">
    <source>
        <dbReference type="SAM" id="MobiDB-lite"/>
    </source>
</evidence>
<evidence type="ECO:0000305" key="3"/>
<evidence type="ECO:0000312" key="4">
    <source>
        <dbReference type="WormBase" id="Bm4490"/>
    </source>
</evidence>
<protein>
    <recommendedName>
        <fullName evidence="1">Small ribosomal subunit protein eS1</fullName>
    </recommendedName>
    <alternativeName>
        <fullName evidence="3">40S ribosomal protein S3a</fullName>
    </alternativeName>
</protein>
<sequence>MAVGKNKKMGKKGAKKKVVDPFTRKEWYDIKAPSMFNVQHIGKTLVNRTQGTKIASEGLKGRVYEVSLGDLNNAESEFRKMRLICEDVQGRTCLTNFHGMRLTRDKLCSIVKKWHTLIEANVAVKTSDGYLLRLFCIGFTKKNARQLKKTSYAKSSKIRQIRAKMVEYMQKEVQGSDLKDVCHKLVPDSIGKDIEKACSYIYPLQDVCIRKVKILKKPKFEIGRLMEMHTDVSTFTSAEGEKIERPDDYEPPVQESV</sequence>
<feature type="initiator methionine" description="Removed" evidence="1">
    <location>
        <position position="1"/>
    </location>
</feature>
<feature type="chain" id="PRO_0000389323" description="Small ribosomal subunit protein eS1">
    <location>
        <begin position="2"/>
        <end position="257"/>
    </location>
</feature>
<feature type="region of interest" description="Disordered" evidence="2">
    <location>
        <begin position="236"/>
        <end position="257"/>
    </location>
</feature>
<feature type="compositionally biased region" description="Basic and acidic residues" evidence="2">
    <location>
        <begin position="239"/>
        <end position="248"/>
    </location>
</feature>
<dbReference type="EMBL" id="DS239340">
    <property type="protein sequence ID" value="EDP34263.1"/>
    <property type="molecule type" value="Genomic_DNA"/>
</dbReference>
<dbReference type="RefSeq" id="XP_001896891.1">
    <property type="nucleotide sequence ID" value="XM_001896856.2"/>
</dbReference>
<dbReference type="SMR" id="A8PJ38"/>
<dbReference type="FunCoup" id="A8PJ38">
    <property type="interactions" value="1068"/>
</dbReference>
<dbReference type="STRING" id="6279.A8PJ38"/>
<dbReference type="EnsemblMetazoa" id="Bm4490.1">
    <property type="protein sequence ID" value="Bm4490.1"/>
    <property type="gene ID" value="WBGene00224751"/>
</dbReference>
<dbReference type="GeneID" id="6100343"/>
<dbReference type="KEGG" id="bmy:BM_BM4490"/>
<dbReference type="CTD" id="6100343"/>
<dbReference type="WormBase" id="Bm4490">
    <property type="protein sequence ID" value="BM00541"/>
    <property type="gene ID" value="WBGene00224751"/>
    <property type="gene designation" value="Bma-rps-1"/>
</dbReference>
<dbReference type="HOGENOM" id="CLU_062507_0_1_1"/>
<dbReference type="InParanoid" id="A8PJ38"/>
<dbReference type="OrthoDB" id="9834376at2759"/>
<dbReference type="Proteomes" id="UP000006672">
    <property type="component" value="Unassembled WGS sequence"/>
</dbReference>
<dbReference type="GO" id="GO:0022627">
    <property type="term" value="C:cytosolic small ribosomal subunit"/>
    <property type="evidence" value="ECO:0007669"/>
    <property type="project" value="UniProtKB-UniRule"/>
</dbReference>
<dbReference type="GO" id="GO:0003735">
    <property type="term" value="F:structural constituent of ribosome"/>
    <property type="evidence" value="ECO:0007669"/>
    <property type="project" value="UniProtKB-UniRule"/>
</dbReference>
<dbReference type="GO" id="GO:0006412">
    <property type="term" value="P:translation"/>
    <property type="evidence" value="ECO:0007669"/>
    <property type="project" value="UniProtKB-UniRule"/>
</dbReference>
<dbReference type="HAMAP" id="MF_03122">
    <property type="entry name" value="Ribosomal_eS1_euk"/>
    <property type="match status" value="1"/>
</dbReference>
<dbReference type="InterPro" id="IPR001593">
    <property type="entry name" value="Ribosomal_eS1"/>
</dbReference>
<dbReference type="InterPro" id="IPR018281">
    <property type="entry name" value="Ribosomal_eS1_CS"/>
</dbReference>
<dbReference type="InterPro" id="IPR027500">
    <property type="entry name" value="Ribosomal_eS1_euk"/>
</dbReference>
<dbReference type="PANTHER" id="PTHR11830">
    <property type="entry name" value="40S RIBOSOMAL PROTEIN S3A"/>
    <property type="match status" value="1"/>
</dbReference>
<dbReference type="Pfam" id="PF01015">
    <property type="entry name" value="Ribosomal_S3Ae"/>
    <property type="match status" value="1"/>
</dbReference>
<dbReference type="SMART" id="SM01397">
    <property type="entry name" value="Ribosomal_S3Ae"/>
    <property type="match status" value="1"/>
</dbReference>
<dbReference type="PROSITE" id="PS01191">
    <property type="entry name" value="RIBOSOMAL_S3AE"/>
    <property type="match status" value="1"/>
</dbReference>
<keyword id="KW-0963">Cytoplasm</keyword>
<keyword id="KW-1185">Reference proteome</keyword>
<keyword id="KW-0687">Ribonucleoprotein</keyword>
<keyword id="KW-0689">Ribosomal protein</keyword>
<reference key="1">
    <citation type="journal article" date="2007" name="Science">
        <title>Draft genome of the filarial nematode parasite Brugia malayi.</title>
        <authorList>
            <person name="Ghedin E."/>
            <person name="Wang S."/>
            <person name="Spiro D."/>
            <person name="Caler E."/>
            <person name="Zhao Q."/>
            <person name="Crabtree J."/>
            <person name="Allen J.E."/>
            <person name="Delcher A.L."/>
            <person name="Guiliano D.B."/>
            <person name="Miranda-Saavedra D."/>
            <person name="Angiuoli S.V."/>
            <person name="Creasy T."/>
            <person name="Amedeo P."/>
            <person name="Haas B."/>
            <person name="El-Sayed N.M."/>
            <person name="Wortman J.R."/>
            <person name="Feldblyum T."/>
            <person name="Tallon L."/>
            <person name="Schatz M."/>
            <person name="Shumway M."/>
            <person name="Koo H."/>
            <person name="Salzberg S.L."/>
            <person name="Schobel S."/>
            <person name="Pertea M."/>
            <person name="Pop M."/>
            <person name="White O."/>
            <person name="Barton G.J."/>
            <person name="Carlow C.K.S."/>
            <person name="Crawford M.J."/>
            <person name="Daub J."/>
            <person name="Dimmic M.W."/>
            <person name="Estes C.F."/>
            <person name="Foster J.M."/>
            <person name="Ganatra M."/>
            <person name="Gregory W.F."/>
            <person name="Johnson N.M."/>
            <person name="Jin J."/>
            <person name="Komuniecki R."/>
            <person name="Korf I."/>
            <person name="Kumar S."/>
            <person name="Laney S."/>
            <person name="Li B.-W."/>
            <person name="Li W."/>
            <person name="Lindblom T.H."/>
            <person name="Lustigman S."/>
            <person name="Ma D."/>
            <person name="Maina C.V."/>
            <person name="Martin D.M."/>
            <person name="McCarter J.P."/>
            <person name="McReynolds L."/>
            <person name="Mitreva M."/>
            <person name="Nutman T.B."/>
            <person name="Parkinson J."/>
            <person name="Peregrin-Alvarez J.M."/>
            <person name="Poole C."/>
            <person name="Ren Q."/>
            <person name="Saunders L."/>
            <person name="Sluder A.E."/>
            <person name="Smith K."/>
            <person name="Stanke M."/>
            <person name="Unnasch T.R."/>
            <person name="Ware J."/>
            <person name="Wei A.D."/>
            <person name="Weil G."/>
            <person name="Williams D.J."/>
            <person name="Zhang Y."/>
            <person name="Williams S.A."/>
            <person name="Fraser-Liggett C."/>
            <person name="Slatko B."/>
            <person name="Blaxter M.L."/>
            <person name="Scott A.L."/>
        </authorList>
    </citation>
    <scope>NUCLEOTIDE SEQUENCE [LARGE SCALE GENOMIC DNA]</scope>
</reference>